<feature type="chain" id="PRO_1000136082" description="Glycerol-3-phosphate acyltransferase">
    <location>
        <begin position="1"/>
        <end position="205"/>
    </location>
</feature>
<feature type="topological domain" description="Periplasmic" evidence="1">
    <location>
        <begin position="1"/>
        <end position="3"/>
    </location>
</feature>
<feature type="transmembrane region" description="Helical" evidence="1">
    <location>
        <begin position="4"/>
        <end position="24"/>
    </location>
</feature>
<feature type="topological domain" description="Cytoplasmic" evidence="1">
    <location>
        <begin position="25"/>
        <end position="52"/>
    </location>
</feature>
<feature type="transmembrane region" description="Helical" evidence="1">
    <location>
        <begin position="53"/>
        <end position="73"/>
    </location>
</feature>
<feature type="topological domain" description="Periplasmic" evidence="1">
    <location>
        <begin position="74"/>
        <end position="80"/>
    </location>
</feature>
<feature type="transmembrane region" description="Helical" evidence="1">
    <location>
        <begin position="81"/>
        <end position="101"/>
    </location>
</feature>
<feature type="topological domain" description="Cytoplasmic" evidence="1">
    <location>
        <begin position="102"/>
        <end position="111"/>
    </location>
</feature>
<feature type="transmembrane region" description="Helical" evidence="1">
    <location>
        <begin position="112"/>
        <end position="132"/>
    </location>
</feature>
<feature type="topological domain" description="Periplasmic" evidence="1">
    <location>
        <begin position="133"/>
        <end position="137"/>
    </location>
</feature>
<feature type="transmembrane region" description="Helical" evidence="1">
    <location>
        <begin position="138"/>
        <end position="158"/>
    </location>
</feature>
<feature type="topological domain" description="Cytoplasmic" evidence="1">
    <location>
        <begin position="159"/>
        <end position="205"/>
    </location>
</feature>
<sequence length="205" mass="22193">MSAIAPGMILIAYLCGSISSAILVCRLCGLPDPRTSGSGNPGATNVLRIGGKGAAVAVLIFDVLKGMLPVWGAYELGVSPFWLGLIAIAACLGHIWPVFFGFKGGKGVATAFGAIAPIGWDLTGVMAGTWLLTVLLSGYSSLGAIVSALIAPFYVWWFKPQFTFPVSMLSCLILLRHHDNIQRLWRRQETKIWTKFKRKREKDPE</sequence>
<gene>
    <name evidence="1" type="primary">plsY</name>
    <name type="synonym">ygiH</name>
    <name type="ordered locus">ECH74115_4371</name>
</gene>
<proteinExistence type="inferred from homology"/>
<accession>B5YR99</accession>
<dbReference type="EC" id="2.3.1.15" evidence="1"/>
<dbReference type="EC" id="2.3.1.n5" evidence="1"/>
<dbReference type="EMBL" id="CP001164">
    <property type="protein sequence ID" value="ACI36451.1"/>
    <property type="molecule type" value="Genomic_DNA"/>
</dbReference>
<dbReference type="RefSeq" id="WP_001272796.1">
    <property type="nucleotide sequence ID" value="NC_011353.1"/>
</dbReference>
<dbReference type="SMR" id="B5YR99"/>
<dbReference type="GeneID" id="93778934"/>
<dbReference type="KEGG" id="ecf:ECH74115_4371"/>
<dbReference type="HOGENOM" id="CLU_081254_0_2_6"/>
<dbReference type="UniPathway" id="UPA00085"/>
<dbReference type="GO" id="GO:0005886">
    <property type="term" value="C:plasma membrane"/>
    <property type="evidence" value="ECO:0007669"/>
    <property type="project" value="UniProtKB-SubCell"/>
</dbReference>
<dbReference type="GO" id="GO:0043772">
    <property type="term" value="F:acyl-phosphate glycerol-3-phosphate acyltransferase activity"/>
    <property type="evidence" value="ECO:0007669"/>
    <property type="project" value="InterPro"/>
</dbReference>
<dbReference type="GO" id="GO:0004366">
    <property type="term" value="F:glycerol-3-phosphate O-acyltransferase activity"/>
    <property type="evidence" value="ECO:0007669"/>
    <property type="project" value="UniProtKB-UniRule"/>
</dbReference>
<dbReference type="GO" id="GO:0008654">
    <property type="term" value="P:phospholipid biosynthetic process"/>
    <property type="evidence" value="ECO:0007669"/>
    <property type="project" value="UniProtKB-UniRule"/>
</dbReference>
<dbReference type="HAMAP" id="MF_01043">
    <property type="entry name" value="PlsY"/>
    <property type="match status" value="1"/>
</dbReference>
<dbReference type="InterPro" id="IPR003811">
    <property type="entry name" value="G3P_acylTferase_PlsY"/>
</dbReference>
<dbReference type="NCBIfam" id="TIGR00023">
    <property type="entry name" value="glycerol-3-phosphate 1-O-acyltransferase PlsY"/>
    <property type="match status" value="1"/>
</dbReference>
<dbReference type="PANTHER" id="PTHR30309:SF0">
    <property type="entry name" value="GLYCEROL-3-PHOSPHATE ACYLTRANSFERASE-RELATED"/>
    <property type="match status" value="1"/>
</dbReference>
<dbReference type="PANTHER" id="PTHR30309">
    <property type="entry name" value="INNER MEMBRANE PROTEIN YGIH"/>
    <property type="match status" value="1"/>
</dbReference>
<dbReference type="Pfam" id="PF02660">
    <property type="entry name" value="G3P_acyltransf"/>
    <property type="match status" value="1"/>
</dbReference>
<dbReference type="SMART" id="SM01207">
    <property type="entry name" value="G3P_acyltransf"/>
    <property type="match status" value="1"/>
</dbReference>
<keyword id="KW-0997">Cell inner membrane</keyword>
<keyword id="KW-1003">Cell membrane</keyword>
<keyword id="KW-0444">Lipid biosynthesis</keyword>
<keyword id="KW-0443">Lipid metabolism</keyword>
<keyword id="KW-0472">Membrane</keyword>
<keyword id="KW-0594">Phospholipid biosynthesis</keyword>
<keyword id="KW-1208">Phospholipid metabolism</keyword>
<keyword id="KW-0808">Transferase</keyword>
<keyword id="KW-0812">Transmembrane</keyword>
<keyword id="KW-1133">Transmembrane helix</keyword>
<reference key="1">
    <citation type="journal article" date="2011" name="Proc. Natl. Acad. Sci. U.S.A.">
        <title>Genomic anatomy of Escherichia coli O157:H7 outbreaks.</title>
        <authorList>
            <person name="Eppinger M."/>
            <person name="Mammel M.K."/>
            <person name="Leclerc J.E."/>
            <person name="Ravel J."/>
            <person name="Cebula T.A."/>
        </authorList>
    </citation>
    <scope>NUCLEOTIDE SEQUENCE [LARGE SCALE GENOMIC DNA]</scope>
    <source>
        <strain>EC4115 / EHEC</strain>
    </source>
</reference>
<name>PLSY_ECO5E</name>
<evidence type="ECO:0000255" key="1">
    <source>
        <dbReference type="HAMAP-Rule" id="MF_01043"/>
    </source>
</evidence>
<protein>
    <recommendedName>
        <fullName evidence="1">Glycerol-3-phosphate acyltransferase</fullName>
    </recommendedName>
    <alternativeName>
        <fullName evidence="1">G3P acyltransferase</fullName>
        <shortName evidence="1">GPAT</shortName>
        <ecNumber evidence="1">2.3.1.15</ecNumber>
        <ecNumber evidence="1">2.3.1.n5</ecNumber>
    </alternativeName>
    <alternativeName>
        <fullName evidence="1">Lysophosphatidic acid synthase</fullName>
        <shortName evidence="1">LPA synthase</shortName>
    </alternativeName>
</protein>
<comment type="function">
    <text evidence="1">Catalyzes the transfer of an acyl group from acyl-ACP to glycerol-3-phosphate (G3P) to form lysophosphatidic acid (LPA). This enzyme can also utilize acyl-CoA as fatty acyl donor, but not acyl-PO(4).</text>
</comment>
<comment type="catalytic activity">
    <reaction evidence="1">
        <text>sn-glycerol 3-phosphate + an acyl-CoA = a 1-acyl-sn-glycero-3-phosphate + CoA</text>
        <dbReference type="Rhea" id="RHEA:15325"/>
        <dbReference type="ChEBI" id="CHEBI:57287"/>
        <dbReference type="ChEBI" id="CHEBI:57597"/>
        <dbReference type="ChEBI" id="CHEBI:57970"/>
        <dbReference type="ChEBI" id="CHEBI:58342"/>
        <dbReference type="EC" id="2.3.1.15"/>
    </reaction>
</comment>
<comment type="catalytic activity">
    <reaction evidence="1">
        <text>a fatty acyl-[ACP] + sn-glycerol 3-phosphate = a 1-acyl-sn-glycero-3-phosphate + holo-[ACP]</text>
        <dbReference type="Rhea" id="RHEA:42300"/>
        <dbReference type="Rhea" id="RHEA-COMP:9685"/>
        <dbReference type="Rhea" id="RHEA-COMP:14125"/>
        <dbReference type="ChEBI" id="CHEBI:57597"/>
        <dbReference type="ChEBI" id="CHEBI:57970"/>
        <dbReference type="ChEBI" id="CHEBI:64479"/>
        <dbReference type="ChEBI" id="CHEBI:138651"/>
        <dbReference type="EC" id="2.3.1.n5"/>
    </reaction>
</comment>
<comment type="pathway">
    <text evidence="1">Lipid metabolism; phospholipid metabolism.</text>
</comment>
<comment type="subunit">
    <text evidence="1">Probably interacts with PlsX.</text>
</comment>
<comment type="subcellular location">
    <subcellularLocation>
        <location evidence="1">Cell inner membrane</location>
        <topology evidence="1">Multi-pass membrane protein</topology>
    </subcellularLocation>
</comment>
<comment type="similarity">
    <text evidence="1">Belongs to the PlsY family.</text>
</comment>
<organism>
    <name type="scientific">Escherichia coli O157:H7 (strain EC4115 / EHEC)</name>
    <dbReference type="NCBI Taxonomy" id="444450"/>
    <lineage>
        <taxon>Bacteria</taxon>
        <taxon>Pseudomonadati</taxon>
        <taxon>Pseudomonadota</taxon>
        <taxon>Gammaproteobacteria</taxon>
        <taxon>Enterobacterales</taxon>
        <taxon>Enterobacteriaceae</taxon>
        <taxon>Escherichia</taxon>
    </lineage>
</organism>